<reference key="1">
    <citation type="journal article" date="2007" name="Genome Res.">
        <title>Genome sequence of a proteolytic (Group I) Clostridium botulinum strain Hall A and comparative analysis of the clostridial genomes.</title>
        <authorList>
            <person name="Sebaihia M."/>
            <person name="Peck M.W."/>
            <person name="Minton N.P."/>
            <person name="Thomson N.R."/>
            <person name="Holden M.T.G."/>
            <person name="Mitchell W.J."/>
            <person name="Carter A.T."/>
            <person name="Bentley S.D."/>
            <person name="Mason D.R."/>
            <person name="Crossman L."/>
            <person name="Paul C.J."/>
            <person name="Ivens A."/>
            <person name="Wells-Bennik M.H.J."/>
            <person name="Davis I.J."/>
            <person name="Cerdeno-Tarraga A.M."/>
            <person name="Churcher C."/>
            <person name="Quail M.A."/>
            <person name="Chillingworth T."/>
            <person name="Feltwell T."/>
            <person name="Fraser A."/>
            <person name="Goodhead I."/>
            <person name="Hance Z."/>
            <person name="Jagels K."/>
            <person name="Larke N."/>
            <person name="Maddison M."/>
            <person name="Moule S."/>
            <person name="Mungall K."/>
            <person name="Norbertczak H."/>
            <person name="Rabbinowitsch E."/>
            <person name="Sanders M."/>
            <person name="Simmonds M."/>
            <person name="White B."/>
            <person name="Whithead S."/>
            <person name="Parkhill J."/>
        </authorList>
    </citation>
    <scope>NUCLEOTIDE SEQUENCE [LARGE SCALE GENOMIC DNA]</scope>
    <source>
        <strain>Hall / ATCC 3502 / NCTC 13319 / Type A</strain>
    </source>
</reference>
<reference key="2">
    <citation type="journal article" date="2007" name="PLoS ONE">
        <title>Analysis of the neurotoxin complex genes in Clostridium botulinum A1-A4 and B1 strains: BoNT/A3, /Ba4 and /B1 clusters are located within plasmids.</title>
        <authorList>
            <person name="Smith T.J."/>
            <person name="Hill K.K."/>
            <person name="Foley B.T."/>
            <person name="Detter J.C."/>
            <person name="Munk A.C."/>
            <person name="Bruce D.C."/>
            <person name="Doggett N.A."/>
            <person name="Smith L.A."/>
            <person name="Marks J.D."/>
            <person name="Xie G."/>
            <person name="Brettin T.S."/>
        </authorList>
    </citation>
    <scope>NUCLEOTIDE SEQUENCE [LARGE SCALE GENOMIC DNA]</scope>
    <source>
        <strain>Hall / ATCC 3502 / NCTC 13319 / Type A</strain>
    </source>
</reference>
<accession>A5I3B0</accession>
<accession>A7G4S0</accession>
<comment type="function">
    <text evidence="1">Molecular chaperone. Has ATPase activity.</text>
</comment>
<comment type="subunit">
    <text evidence="1">Homodimer.</text>
</comment>
<comment type="subcellular location">
    <subcellularLocation>
        <location evidence="1">Cytoplasm</location>
    </subcellularLocation>
</comment>
<comment type="similarity">
    <text evidence="1">Belongs to the heat shock protein 90 family.</text>
</comment>
<sequence length="626" mass="72853">METKQFKAESKRLLDLMINSIYTHKEIFLRELISNSSDAIDKIYYKTLTDDSLKFERDNYYIRVVSDKENRILKIADTGIGMTKEELENNLGVIAKSGSLQFKKENEVKEGYDIIGQFGVGFYSAFLVSDDVTVISKAFGSNEAYKWNSKGAEGYTIEPCEKETYGTEIILKIKDNTEEENYDEFLEEYTLKSIIKKYSDFIRYPIKMDLTKTKPKEDNKEEFEEYKEEETINSMVPIWRKNKNELKAEDYENFYAEKHYGFDKPIKYIHTSVDGVVSYNAILFIPETTPYDFYTKEYEKGLELYSSGVLIMNKCGDLLPDYFGFVKGIVDSEDLSLNISREILQHDRQLKLIAKNIKTKIKNELESLLKKERDKYEKFYESFGRQLKYGVYSDFGSNKDILQDLLMFYSSKEKKMVTLAEYVSRMPEDQKYIYYAVGESNERIEKLPQIEGVLDKGYEVLYFTDDIDEFAIKMLMSYKEKEFKSVSSGDLGIEGEEKENTSNSDDKENKELFESMKDMLSGKVKDVRASKRLKNHPVCLANEGELSIEMEKVLNAMPNNQNIKADKVLEININHDVFKSLKEAYEGDKEKLKLYTDLLYNQALLIEGLAINDPVEFTNNICKIMK</sequence>
<feature type="chain" id="PRO_1000014912" description="Chaperone protein HtpG">
    <location>
        <begin position="1"/>
        <end position="626"/>
    </location>
</feature>
<feature type="region of interest" description="A; substrate-binding" evidence="1">
    <location>
        <begin position="1"/>
        <end position="341"/>
    </location>
</feature>
<feature type="region of interest" description="B" evidence="1">
    <location>
        <begin position="342"/>
        <end position="552"/>
    </location>
</feature>
<feature type="region of interest" description="Disordered" evidence="2">
    <location>
        <begin position="490"/>
        <end position="509"/>
    </location>
</feature>
<feature type="region of interest" description="C" evidence="1">
    <location>
        <begin position="553"/>
        <end position="626"/>
    </location>
</feature>
<feature type="compositionally biased region" description="Basic and acidic residues" evidence="2">
    <location>
        <begin position="498"/>
        <end position="509"/>
    </location>
</feature>
<dbReference type="EMBL" id="CP000727">
    <property type="protein sequence ID" value="ABS38135.1"/>
    <property type="molecule type" value="Genomic_DNA"/>
</dbReference>
<dbReference type="EMBL" id="AM412317">
    <property type="protein sequence ID" value="CAL83528.1"/>
    <property type="molecule type" value="Genomic_DNA"/>
</dbReference>
<dbReference type="RefSeq" id="WP_011986521.1">
    <property type="nucleotide sequence ID" value="NC_009698.1"/>
</dbReference>
<dbReference type="RefSeq" id="YP_001254488.1">
    <property type="nucleotide sequence ID" value="NC_009495.1"/>
</dbReference>
<dbReference type="RefSeq" id="YP_001387785.1">
    <property type="nucleotide sequence ID" value="NC_009698.1"/>
</dbReference>
<dbReference type="SMR" id="A5I3B0"/>
<dbReference type="GeneID" id="5186240"/>
<dbReference type="KEGG" id="cbh:CLC_1931"/>
<dbReference type="KEGG" id="cbo:CBO1985"/>
<dbReference type="PATRIC" id="fig|413999.7.peg.1959"/>
<dbReference type="HOGENOM" id="CLU_006684_3_0_9"/>
<dbReference type="PRO" id="PR:A5I3B0"/>
<dbReference type="Proteomes" id="UP000001986">
    <property type="component" value="Chromosome"/>
</dbReference>
<dbReference type="GO" id="GO:0005829">
    <property type="term" value="C:cytosol"/>
    <property type="evidence" value="ECO:0000318"/>
    <property type="project" value="GO_Central"/>
</dbReference>
<dbReference type="GO" id="GO:0005524">
    <property type="term" value="F:ATP binding"/>
    <property type="evidence" value="ECO:0000318"/>
    <property type="project" value="GO_Central"/>
</dbReference>
<dbReference type="GO" id="GO:0016887">
    <property type="term" value="F:ATP hydrolysis activity"/>
    <property type="evidence" value="ECO:0000318"/>
    <property type="project" value="GO_Central"/>
</dbReference>
<dbReference type="GO" id="GO:0140662">
    <property type="term" value="F:ATP-dependent protein folding chaperone"/>
    <property type="evidence" value="ECO:0007669"/>
    <property type="project" value="InterPro"/>
</dbReference>
<dbReference type="GO" id="GO:0051082">
    <property type="term" value="F:unfolded protein binding"/>
    <property type="evidence" value="ECO:0000318"/>
    <property type="project" value="GO_Central"/>
</dbReference>
<dbReference type="GO" id="GO:0006974">
    <property type="term" value="P:DNA damage response"/>
    <property type="evidence" value="ECO:0000318"/>
    <property type="project" value="GO_Central"/>
</dbReference>
<dbReference type="GO" id="GO:0006457">
    <property type="term" value="P:protein folding"/>
    <property type="evidence" value="ECO:0000318"/>
    <property type="project" value="GO_Central"/>
</dbReference>
<dbReference type="GO" id="GO:0009408">
    <property type="term" value="P:response to heat"/>
    <property type="evidence" value="ECO:0000318"/>
    <property type="project" value="GO_Central"/>
</dbReference>
<dbReference type="CDD" id="cd16927">
    <property type="entry name" value="HATPase_Hsp90-like"/>
    <property type="match status" value="1"/>
</dbReference>
<dbReference type="FunFam" id="1.20.120.790:FF:000006">
    <property type="entry name" value="Chaperone protein HtpG"/>
    <property type="match status" value="1"/>
</dbReference>
<dbReference type="FunFam" id="3.40.50.11260:FF:000008">
    <property type="entry name" value="Chaperone protein HtpG"/>
    <property type="match status" value="1"/>
</dbReference>
<dbReference type="FunFam" id="3.30.565.10:FF:000054">
    <property type="entry name" value="Heat shock protein 90"/>
    <property type="match status" value="1"/>
</dbReference>
<dbReference type="FunFam" id="3.30.230.80:FF:000002">
    <property type="entry name" value="Molecular chaperone HtpG"/>
    <property type="match status" value="1"/>
</dbReference>
<dbReference type="Gene3D" id="3.30.230.80">
    <property type="match status" value="1"/>
</dbReference>
<dbReference type="Gene3D" id="3.40.50.11260">
    <property type="match status" value="1"/>
</dbReference>
<dbReference type="Gene3D" id="1.20.120.790">
    <property type="entry name" value="Heat shock protein 90, C-terminal domain"/>
    <property type="match status" value="1"/>
</dbReference>
<dbReference type="Gene3D" id="3.30.565.10">
    <property type="entry name" value="Histidine kinase-like ATPase, C-terminal domain"/>
    <property type="match status" value="1"/>
</dbReference>
<dbReference type="HAMAP" id="MF_00505">
    <property type="entry name" value="HSP90"/>
    <property type="match status" value="1"/>
</dbReference>
<dbReference type="InterPro" id="IPR036890">
    <property type="entry name" value="HATPase_C_sf"/>
</dbReference>
<dbReference type="InterPro" id="IPR019805">
    <property type="entry name" value="Heat_shock_protein_90_CS"/>
</dbReference>
<dbReference type="InterPro" id="IPR037196">
    <property type="entry name" value="HSP90_C"/>
</dbReference>
<dbReference type="InterPro" id="IPR001404">
    <property type="entry name" value="Hsp90_fam"/>
</dbReference>
<dbReference type="InterPro" id="IPR020575">
    <property type="entry name" value="Hsp90_N"/>
</dbReference>
<dbReference type="InterPro" id="IPR020568">
    <property type="entry name" value="Ribosomal_Su5_D2-typ_SF"/>
</dbReference>
<dbReference type="NCBIfam" id="NF003555">
    <property type="entry name" value="PRK05218.1"/>
    <property type="match status" value="1"/>
</dbReference>
<dbReference type="PANTHER" id="PTHR11528">
    <property type="entry name" value="HEAT SHOCK PROTEIN 90 FAMILY MEMBER"/>
    <property type="match status" value="1"/>
</dbReference>
<dbReference type="Pfam" id="PF13589">
    <property type="entry name" value="HATPase_c_3"/>
    <property type="match status" value="1"/>
</dbReference>
<dbReference type="Pfam" id="PF00183">
    <property type="entry name" value="HSP90"/>
    <property type="match status" value="2"/>
</dbReference>
<dbReference type="PIRSF" id="PIRSF002583">
    <property type="entry name" value="Hsp90"/>
    <property type="match status" value="1"/>
</dbReference>
<dbReference type="PRINTS" id="PR00775">
    <property type="entry name" value="HEATSHOCK90"/>
</dbReference>
<dbReference type="SUPFAM" id="SSF55874">
    <property type="entry name" value="ATPase domain of HSP90 chaperone/DNA topoisomerase II/histidine kinase"/>
    <property type="match status" value="1"/>
</dbReference>
<dbReference type="SUPFAM" id="SSF110942">
    <property type="entry name" value="HSP90 C-terminal domain"/>
    <property type="match status" value="1"/>
</dbReference>
<dbReference type="SUPFAM" id="SSF54211">
    <property type="entry name" value="Ribosomal protein S5 domain 2-like"/>
    <property type="match status" value="1"/>
</dbReference>
<dbReference type="PROSITE" id="PS00298">
    <property type="entry name" value="HSP90"/>
    <property type="match status" value="1"/>
</dbReference>
<gene>
    <name evidence="1" type="primary">htpG</name>
    <name type="ordered locus">CBO1985</name>
    <name type="ordered locus">CLC_1931</name>
</gene>
<evidence type="ECO:0000255" key="1">
    <source>
        <dbReference type="HAMAP-Rule" id="MF_00505"/>
    </source>
</evidence>
<evidence type="ECO:0000256" key="2">
    <source>
        <dbReference type="SAM" id="MobiDB-lite"/>
    </source>
</evidence>
<name>HTPG_CLOBH</name>
<proteinExistence type="inferred from homology"/>
<organism>
    <name type="scientific">Clostridium botulinum (strain Hall / ATCC 3502 / NCTC 13319 / Type A)</name>
    <dbReference type="NCBI Taxonomy" id="441771"/>
    <lineage>
        <taxon>Bacteria</taxon>
        <taxon>Bacillati</taxon>
        <taxon>Bacillota</taxon>
        <taxon>Clostridia</taxon>
        <taxon>Eubacteriales</taxon>
        <taxon>Clostridiaceae</taxon>
        <taxon>Clostridium</taxon>
    </lineage>
</organism>
<keyword id="KW-0067">ATP-binding</keyword>
<keyword id="KW-0143">Chaperone</keyword>
<keyword id="KW-0963">Cytoplasm</keyword>
<keyword id="KW-0547">Nucleotide-binding</keyword>
<keyword id="KW-1185">Reference proteome</keyword>
<keyword id="KW-0346">Stress response</keyword>
<protein>
    <recommendedName>
        <fullName evidence="1">Chaperone protein HtpG</fullName>
    </recommendedName>
    <alternativeName>
        <fullName evidence="1">Heat shock protein HtpG</fullName>
    </alternativeName>
    <alternativeName>
        <fullName evidence="1">High temperature protein G</fullName>
    </alternativeName>
</protein>